<feature type="chain" id="PRO_0000141441" description="4-hydroxy-tetrahydrodipicolinate reductase">
    <location>
        <begin position="1"/>
        <end position="269"/>
    </location>
</feature>
<feature type="active site" description="Proton donor/acceptor" evidence="1">
    <location>
        <position position="158"/>
    </location>
</feature>
<feature type="active site" description="Proton donor" evidence="1">
    <location>
        <position position="162"/>
    </location>
</feature>
<feature type="binding site" evidence="1">
    <location>
        <begin position="9"/>
        <end position="14"/>
    </location>
    <ligand>
        <name>NAD(+)</name>
        <dbReference type="ChEBI" id="CHEBI:57540"/>
    </ligand>
</feature>
<feature type="binding site" evidence="1">
    <location>
        <position position="35"/>
    </location>
    <ligand>
        <name>NAD(+)</name>
        <dbReference type="ChEBI" id="CHEBI:57540"/>
    </ligand>
</feature>
<feature type="binding site" evidence="1">
    <location>
        <begin position="102"/>
        <end position="104"/>
    </location>
    <ligand>
        <name>NAD(+)</name>
        <dbReference type="ChEBI" id="CHEBI:57540"/>
    </ligand>
</feature>
<feature type="binding site" evidence="1">
    <location>
        <begin position="128"/>
        <end position="131"/>
    </location>
    <ligand>
        <name>NAD(+)</name>
        <dbReference type="ChEBI" id="CHEBI:57540"/>
    </ligand>
</feature>
<feature type="binding site" evidence="1">
    <location>
        <position position="159"/>
    </location>
    <ligand>
        <name>(S)-2,3,4,5-tetrahydrodipicolinate</name>
        <dbReference type="ChEBI" id="CHEBI:16845"/>
    </ligand>
</feature>
<feature type="binding site" evidence="1">
    <location>
        <begin position="168"/>
        <end position="169"/>
    </location>
    <ligand>
        <name>(S)-2,3,4,5-tetrahydrodipicolinate</name>
        <dbReference type="ChEBI" id="CHEBI:16845"/>
    </ligand>
</feature>
<accession>Q7NLC0</accession>
<protein>
    <recommendedName>
        <fullName evidence="1">4-hydroxy-tetrahydrodipicolinate reductase</fullName>
        <shortName evidence="1">HTPA reductase</shortName>
        <ecNumber evidence="1">1.17.1.8</ecNumber>
    </recommendedName>
</protein>
<evidence type="ECO:0000255" key="1">
    <source>
        <dbReference type="HAMAP-Rule" id="MF_00102"/>
    </source>
</evidence>
<evidence type="ECO:0000305" key="2"/>
<organism>
    <name type="scientific">Gloeobacter violaceus (strain ATCC 29082 / PCC 7421)</name>
    <dbReference type="NCBI Taxonomy" id="251221"/>
    <lineage>
        <taxon>Bacteria</taxon>
        <taxon>Bacillati</taxon>
        <taxon>Cyanobacteriota</taxon>
        <taxon>Cyanophyceae</taxon>
        <taxon>Gloeobacterales</taxon>
        <taxon>Gloeobacteraceae</taxon>
        <taxon>Gloeobacter</taxon>
    </lineage>
</organism>
<name>DAPB_GLOVI</name>
<reference key="1">
    <citation type="journal article" date="2003" name="DNA Res.">
        <title>Complete genome structure of Gloeobacter violaceus PCC 7421, a cyanobacterium that lacks thylakoids.</title>
        <authorList>
            <person name="Nakamura Y."/>
            <person name="Kaneko T."/>
            <person name="Sato S."/>
            <person name="Mimuro M."/>
            <person name="Miyashita H."/>
            <person name="Tsuchiya T."/>
            <person name="Sasamoto S."/>
            <person name="Watanabe A."/>
            <person name="Kawashima K."/>
            <person name="Kishida Y."/>
            <person name="Kiyokawa C."/>
            <person name="Kohara M."/>
            <person name="Matsumoto M."/>
            <person name="Matsuno A."/>
            <person name="Nakazaki N."/>
            <person name="Shimpo S."/>
            <person name="Takeuchi C."/>
            <person name="Yamada M."/>
            <person name="Tabata S."/>
        </authorList>
    </citation>
    <scope>NUCLEOTIDE SEQUENCE [LARGE SCALE GENOMIC DNA]</scope>
    <source>
        <strain>ATCC 29082 / PCC 7421</strain>
    </source>
</reference>
<dbReference type="EC" id="1.17.1.8" evidence="1"/>
<dbReference type="EMBL" id="BA000045">
    <property type="protein sequence ID" value="BAC89147.1"/>
    <property type="molecule type" value="Genomic_DNA"/>
</dbReference>
<dbReference type="RefSeq" id="NP_924152.1">
    <property type="nucleotide sequence ID" value="NC_005125.1"/>
</dbReference>
<dbReference type="RefSeq" id="WP_011141206.1">
    <property type="nucleotide sequence ID" value="NC_005125.1"/>
</dbReference>
<dbReference type="SMR" id="Q7NLC0"/>
<dbReference type="FunCoup" id="Q7NLC0">
    <property type="interactions" value="247"/>
</dbReference>
<dbReference type="STRING" id="251221.gene:10758685"/>
<dbReference type="EnsemblBacteria" id="BAC89147">
    <property type="protein sequence ID" value="BAC89147"/>
    <property type="gene ID" value="BAC89147"/>
</dbReference>
<dbReference type="KEGG" id="gvi:gll1206"/>
<dbReference type="PATRIC" id="fig|251221.4.peg.1230"/>
<dbReference type="eggNOG" id="COG0289">
    <property type="taxonomic scope" value="Bacteria"/>
</dbReference>
<dbReference type="HOGENOM" id="CLU_047479_0_1_3"/>
<dbReference type="InParanoid" id="Q7NLC0"/>
<dbReference type="OrthoDB" id="9790352at2"/>
<dbReference type="PhylomeDB" id="Q7NLC0"/>
<dbReference type="UniPathway" id="UPA00034">
    <property type="reaction ID" value="UER00018"/>
</dbReference>
<dbReference type="Proteomes" id="UP000000557">
    <property type="component" value="Chromosome"/>
</dbReference>
<dbReference type="GO" id="GO:0005829">
    <property type="term" value="C:cytosol"/>
    <property type="evidence" value="ECO:0000318"/>
    <property type="project" value="GO_Central"/>
</dbReference>
<dbReference type="GO" id="GO:0008839">
    <property type="term" value="F:4-hydroxy-tetrahydrodipicolinate reductase"/>
    <property type="evidence" value="ECO:0000318"/>
    <property type="project" value="GO_Central"/>
</dbReference>
<dbReference type="GO" id="GO:0051287">
    <property type="term" value="F:NAD binding"/>
    <property type="evidence" value="ECO:0007669"/>
    <property type="project" value="UniProtKB-UniRule"/>
</dbReference>
<dbReference type="GO" id="GO:0050661">
    <property type="term" value="F:NADP binding"/>
    <property type="evidence" value="ECO:0007669"/>
    <property type="project" value="UniProtKB-UniRule"/>
</dbReference>
<dbReference type="GO" id="GO:0016726">
    <property type="term" value="F:oxidoreductase activity, acting on CH or CH2 groups, NAD or NADP as acceptor"/>
    <property type="evidence" value="ECO:0007669"/>
    <property type="project" value="UniProtKB-UniRule"/>
</dbReference>
<dbReference type="GO" id="GO:0019877">
    <property type="term" value="P:diaminopimelate biosynthetic process"/>
    <property type="evidence" value="ECO:0000318"/>
    <property type="project" value="GO_Central"/>
</dbReference>
<dbReference type="GO" id="GO:0009089">
    <property type="term" value="P:lysine biosynthetic process via diaminopimelate"/>
    <property type="evidence" value="ECO:0007669"/>
    <property type="project" value="UniProtKB-UniRule"/>
</dbReference>
<dbReference type="CDD" id="cd02274">
    <property type="entry name" value="DHDPR_N"/>
    <property type="match status" value="1"/>
</dbReference>
<dbReference type="FunFam" id="3.30.360.10:FF:000009">
    <property type="entry name" value="4-hydroxy-tetrahydrodipicolinate reductase"/>
    <property type="match status" value="1"/>
</dbReference>
<dbReference type="Gene3D" id="3.30.360.10">
    <property type="entry name" value="Dihydrodipicolinate Reductase, domain 2"/>
    <property type="match status" value="1"/>
</dbReference>
<dbReference type="Gene3D" id="3.40.50.720">
    <property type="entry name" value="NAD(P)-binding Rossmann-like Domain"/>
    <property type="match status" value="1"/>
</dbReference>
<dbReference type="HAMAP" id="MF_00102">
    <property type="entry name" value="DapB"/>
    <property type="match status" value="1"/>
</dbReference>
<dbReference type="InterPro" id="IPR022663">
    <property type="entry name" value="DapB_C"/>
</dbReference>
<dbReference type="InterPro" id="IPR000846">
    <property type="entry name" value="DapB_N"/>
</dbReference>
<dbReference type="InterPro" id="IPR022664">
    <property type="entry name" value="DapB_N_CS"/>
</dbReference>
<dbReference type="InterPro" id="IPR023940">
    <property type="entry name" value="DHDPR_bac"/>
</dbReference>
<dbReference type="InterPro" id="IPR036291">
    <property type="entry name" value="NAD(P)-bd_dom_sf"/>
</dbReference>
<dbReference type="NCBIfam" id="TIGR00036">
    <property type="entry name" value="dapB"/>
    <property type="match status" value="1"/>
</dbReference>
<dbReference type="PANTHER" id="PTHR20836:SF0">
    <property type="entry name" value="4-HYDROXY-TETRAHYDRODIPICOLINATE REDUCTASE 1, CHLOROPLASTIC-RELATED"/>
    <property type="match status" value="1"/>
</dbReference>
<dbReference type="PANTHER" id="PTHR20836">
    <property type="entry name" value="DIHYDRODIPICOLINATE REDUCTASE"/>
    <property type="match status" value="1"/>
</dbReference>
<dbReference type="Pfam" id="PF05173">
    <property type="entry name" value="DapB_C"/>
    <property type="match status" value="1"/>
</dbReference>
<dbReference type="Pfam" id="PF01113">
    <property type="entry name" value="DapB_N"/>
    <property type="match status" value="1"/>
</dbReference>
<dbReference type="PIRSF" id="PIRSF000161">
    <property type="entry name" value="DHPR"/>
    <property type="match status" value="1"/>
</dbReference>
<dbReference type="SUPFAM" id="SSF55347">
    <property type="entry name" value="Glyceraldehyde-3-phosphate dehydrogenase-like, C-terminal domain"/>
    <property type="match status" value="1"/>
</dbReference>
<dbReference type="SUPFAM" id="SSF51735">
    <property type="entry name" value="NAD(P)-binding Rossmann-fold domains"/>
    <property type="match status" value="1"/>
</dbReference>
<dbReference type="PROSITE" id="PS01298">
    <property type="entry name" value="DAPB"/>
    <property type="match status" value="1"/>
</dbReference>
<gene>
    <name evidence="1" type="primary">dapB</name>
    <name type="ordered locus">gll1206</name>
</gene>
<proteinExistence type="inferred from homology"/>
<sequence length="269" mass="28445">MAIPVVVVGCAGKMGREVVKAVHAAPDMAVVGAVDRSHIDEDAGELAGIGPIDVLVTDNLEITCAMVAQERAPGVMVDFTHPRGIYDRVRSAIAYGVRPVVGTTGLPPEHIEELAEFADKASTGCIVAPNFAIGMILLQQACLRAAEYFDHVEIIELHHNRKADAPSGTALATAQMIATTGKTFNVPEVSESELVAGARGGMTPGDIRIHSLRLPGLLAHQAVIFGGLGQSYTLRHDTTDRAAYMPGVLLAIRKVLGLKSLVYGLEKII</sequence>
<keyword id="KW-0028">Amino-acid biosynthesis</keyword>
<keyword id="KW-0963">Cytoplasm</keyword>
<keyword id="KW-0220">Diaminopimelate biosynthesis</keyword>
<keyword id="KW-0457">Lysine biosynthesis</keyword>
<keyword id="KW-0520">NAD</keyword>
<keyword id="KW-0521">NADP</keyword>
<keyword id="KW-0560">Oxidoreductase</keyword>
<keyword id="KW-1185">Reference proteome</keyword>
<comment type="function">
    <text evidence="1">Catalyzes the conversion of 4-hydroxy-tetrahydrodipicolinate (HTPA) to tetrahydrodipicolinate.</text>
</comment>
<comment type="catalytic activity">
    <reaction evidence="1">
        <text>(S)-2,3,4,5-tetrahydrodipicolinate + NAD(+) + H2O = (2S,4S)-4-hydroxy-2,3,4,5-tetrahydrodipicolinate + NADH + H(+)</text>
        <dbReference type="Rhea" id="RHEA:35323"/>
        <dbReference type="ChEBI" id="CHEBI:15377"/>
        <dbReference type="ChEBI" id="CHEBI:15378"/>
        <dbReference type="ChEBI" id="CHEBI:16845"/>
        <dbReference type="ChEBI" id="CHEBI:57540"/>
        <dbReference type="ChEBI" id="CHEBI:57945"/>
        <dbReference type="ChEBI" id="CHEBI:67139"/>
        <dbReference type="EC" id="1.17.1.8"/>
    </reaction>
</comment>
<comment type="catalytic activity">
    <reaction evidence="1">
        <text>(S)-2,3,4,5-tetrahydrodipicolinate + NADP(+) + H2O = (2S,4S)-4-hydroxy-2,3,4,5-tetrahydrodipicolinate + NADPH + H(+)</text>
        <dbReference type="Rhea" id="RHEA:35331"/>
        <dbReference type="ChEBI" id="CHEBI:15377"/>
        <dbReference type="ChEBI" id="CHEBI:15378"/>
        <dbReference type="ChEBI" id="CHEBI:16845"/>
        <dbReference type="ChEBI" id="CHEBI:57783"/>
        <dbReference type="ChEBI" id="CHEBI:58349"/>
        <dbReference type="ChEBI" id="CHEBI:67139"/>
        <dbReference type="EC" id="1.17.1.8"/>
    </reaction>
</comment>
<comment type="pathway">
    <text evidence="1">Amino-acid biosynthesis; L-lysine biosynthesis via DAP pathway; (S)-tetrahydrodipicolinate from L-aspartate: step 4/4.</text>
</comment>
<comment type="subcellular location">
    <subcellularLocation>
        <location evidence="1">Cytoplasm</location>
    </subcellularLocation>
</comment>
<comment type="similarity">
    <text evidence="1">Belongs to the DapB family.</text>
</comment>
<comment type="caution">
    <text evidence="2">Was originally thought to be a dihydrodipicolinate reductase (DHDPR), catalyzing the conversion of dihydrodipicolinate to tetrahydrodipicolinate. However, it was shown in E.coli that the substrate of the enzymatic reaction is not dihydrodipicolinate (DHDP) but in fact (2S,4S)-4-hydroxy-2,3,4,5-tetrahydrodipicolinic acid (HTPA), the product released by the DapA-catalyzed reaction.</text>
</comment>